<protein>
    <recommendedName>
        <fullName>N-(5'-phosphoribosyl)anthranilate isomerase 2, chloroplastic</fullName>
        <ecNumber>5.3.1.24</ecNumber>
    </recommendedName>
</protein>
<accession>Q42527</accession>
<accession>F4K0R4</accession>
<accession>Q9FFF7</accession>
<proteinExistence type="evidence at transcript level"/>
<sequence>MSTGISTDLHVHFGALNFSKTYKSGLSNRTVSFSRVGYAQNRKLSCSVSNTENVAPKDDERGKDRPLVKMCGITSARDAAMAVEAGADFIGMIIWPHSKRSISLSVAKDISKVAREGGAKPVGVFVEDDDNTILRAADSSDLELVQLHGNGSRAAFSRLVRKRRVIYVLNANQDGKLLNEVPEEDCHLADWILVDSATGGSGHGFNWAQFKLPSVRSRNGWLLAGGINPTNVSEALSILQPDGIDVSSGICGTDGIQKDKSKISSFITAVRSVHY</sequence>
<name>PAI2_ARATH</name>
<feature type="transit peptide" description="Chloroplast" evidence="1">
    <location>
        <begin position="1"/>
        <end position="32"/>
    </location>
</feature>
<feature type="chain" id="PRO_0000417454" description="N-(5'-phosphoribosyl)anthranilate isomerase 2, chloroplastic">
    <location>
        <begin position="33"/>
        <end position="275"/>
    </location>
</feature>
<feature type="splice variant" id="VSP_043742" description="In isoform 2." evidence="4">
    <original>Q</original>
    <variation>QVLYILIDFDFALTKVIFSTLLTVDSYGFLQ</variation>
    <location>
        <position position="146"/>
    </location>
</feature>
<feature type="splice variant" id="VSP_043743" description="In isoform 2." evidence="4">
    <original>SGHGFNWAQFKLPSVRSRNGWLLAG</original>
    <variation>RYQEQLFNFFRIVMYSLEEKFKQSL</variation>
    <location>
        <begin position="201"/>
        <end position="225"/>
    </location>
</feature>
<feature type="splice variant" id="VSP_043744" description="In isoform 2." evidence="4">
    <location>
        <begin position="226"/>
        <end position="275"/>
    </location>
</feature>
<gene>
    <name type="primary">PAI2</name>
    <name type="ordered locus">At5g05590</name>
    <name type="ORF">MOP10.13</name>
</gene>
<comment type="catalytic activity">
    <reaction>
        <text>N-(5-phospho-beta-D-ribosyl)anthranilate = 1-(2-carboxyphenylamino)-1-deoxy-D-ribulose 5-phosphate</text>
        <dbReference type="Rhea" id="RHEA:21540"/>
        <dbReference type="ChEBI" id="CHEBI:18277"/>
        <dbReference type="ChEBI" id="CHEBI:58613"/>
        <dbReference type="EC" id="5.3.1.24"/>
    </reaction>
</comment>
<comment type="pathway">
    <text>Amino-acid biosynthesis; L-tryptophan biosynthesis; L-tryptophan from chorismate: step 3/5.</text>
</comment>
<comment type="subcellular location">
    <subcellularLocation>
        <location evidence="3">Plastid</location>
        <location evidence="3">Chloroplast</location>
    </subcellularLocation>
</comment>
<comment type="alternative products">
    <event type="alternative splicing"/>
    <isoform>
        <id>Q42527-1</id>
        <name>1</name>
        <sequence type="displayed"/>
    </isoform>
    <isoform>
        <id>Q42527-2</id>
        <name>2</name>
        <sequence type="described" ref="VSP_043742 VSP_043743 VSP_043744"/>
    </isoform>
</comment>
<comment type="tissue specificity">
    <text evidence="2">Expressed in roots and shoots.</text>
</comment>
<comment type="induction">
    <text evidence="2">By silver nitrate and UV irradiation.</text>
</comment>
<comment type="similarity">
    <text evidence="4">Belongs to the TrpF family.</text>
</comment>
<comment type="sequence caution" evidence="4">
    <conflict type="erroneous gene model prediction">
        <sequence resource="EMBL-CDS" id="BAB11548"/>
    </conflict>
</comment>
<comment type="sequence caution" evidence="4">
    <conflict type="miscellaneous discrepancy">
        <sequence resource="EMBL" id="BX829410"/>
    </conflict>
    <text>Sequencing errors.</text>
</comment>
<reference key="1">
    <citation type="journal article" date="1995" name="Plant Cell">
        <title>Arabidopsis phosphoribosylanthranilate isomerase: molecular genetic analysis of triplicate tryptophan pathway genes.</title>
        <authorList>
            <person name="Li J."/>
            <person name="Zhao J."/>
            <person name="Rose A.B."/>
            <person name="Schmidt R."/>
            <person name="Last R.L."/>
        </authorList>
    </citation>
    <scope>NUCLEOTIDE SEQUENCE [GENOMIC DNA]</scope>
    <source>
        <strain>cv. Columbia</strain>
    </source>
</reference>
<reference key="2">
    <citation type="journal article" date="1997" name="DNA Res.">
        <title>Structural analysis of Arabidopsis thaliana chromosome 5. I. Sequence features of the 1.6 Mb regions covered by twenty physically assigned P1 clones.</title>
        <authorList>
            <person name="Sato S."/>
            <person name="Kotani H."/>
            <person name="Nakamura Y."/>
            <person name="Kaneko T."/>
            <person name="Asamizu E."/>
            <person name="Fukami M."/>
            <person name="Miyajima N."/>
            <person name="Tabata S."/>
        </authorList>
    </citation>
    <scope>NUCLEOTIDE SEQUENCE [LARGE SCALE GENOMIC DNA]</scope>
    <source>
        <strain>cv. Columbia</strain>
    </source>
</reference>
<reference key="3">
    <citation type="journal article" date="2017" name="Plant J.">
        <title>Araport11: a complete reannotation of the Arabidopsis thaliana reference genome.</title>
        <authorList>
            <person name="Cheng C.Y."/>
            <person name="Krishnakumar V."/>
            <person name="Chan A.P."/>
            <person name="Thibaud-Nissen F."/>
            <person name="Schobel S."/>
            <person name="Town C.D."/>
        </authorList>
    </citation>
    <scope>GENOME REANNOTATION</scope>
    <source>
        <strain>cv. Columbia</strain>
    </source>
</reference>
<reference key="4">
    <citation type="journal article" date="2003" name="Science">
        <title>Empirical analysis of transcriptional activity in the Arabidopsis genome.</title>
        <authorList>
            <person name="Yamada K."/>
            <person name="Lim J."/>
            <person name="Dale J.M."/>
            <person name="Chen H."/>
            <person name="Shinn P."/>
            <person name="Palm C.J."/>
            <person name="Southwick A.M."/>
            <person name="Wu H.C."/>
            <person name="Kim C.J."/>
            <person name="Nguyen M."/>
            <person name="Pham P.K."/>
            <person name="Cheuk R.F."/>
            <person name="Karlin-Newmann G."/>
            <person name="Liu S.X."/>
            <person name="Lam B."/>
            <person name="Sakano H."/>
            <person name="Wu T."/>
            <person name="Yu G."/>
            <person name="Miranda M."/>
            <person name="Quach H.L."/>
            <person name="Tripp M."/>
            <person name="Chang C.H."/>
            <person name="Lee J.M."/>
            <person name="Toriumi M.J."/>
            <person name="Chan M.M."/>
            <person name="Tang C.C."/>
            <person name="Onodera C.S."/>
            <person name="Deng J.M."/>
            <person name="Akiyama K."/>
            <person name="Ansari Y."/>
            <person name="Arakawa T."/>
            <person name="Banh J."/>
            <person name="Banno F."/>
            <person name="Bowser L."/>
            <person name="Brooks S.Y."/>
            <person name="Carninci P."/>
            <person name="Chao Q."/>
            <person name="Choy N."/>
            <person name="Enju A."/>
            <person name="Goldsmith A.D."/>
            <person name="Gurjal M."/>
            <person name="Hansen N.F."/>
            <person name="Hayashizaki Y."/>
            <person name="Johnson-Hopson C."/>
            <person name="Hsuan V.W."/>
            <person name="Iida K."/>
            <person name="Karnes M."/>
            <person name="Khan S."/>
            <person name="Koesema E."/>
            <person name="Ishida J."/>
            <person name="Jiang P.X."/>
            <person name="Jones T."/>
            <person name="Kawai J."/>
            <person name="Kamiya A."/>
            <person name="Meyers C."/>
            <person name="Nakajima M."/>
            <person name="Narusaka M."/>
            <person name="Seki M."/>
            <person name="Sakurai T."/>
            <person name="Satou M."/>
            <person name="Tamse R."/>
            <person name="Vaysberg M."/>
            <person name="Wallender E.K."/>
            <person name="Wong C."/>
            <person name="Yamamura Y."/>
            <person name="Yuan S."/>
            <person name="Shinozaki K."/>
            <person name="Davis R.W."/>
            <person name="Theologis A."/>
            <person name="Ecker J.R."/>
        </authorList>
    </citation>
    <scope>NUCLEOTIDE SEQUENCE [LARGE SCALE MRNA] (ISOFORM 1)</scope>
    <source>
        <strain>cv. Columbia</strain>
    </source>
</reference>
<reference key="5">
    <citation type="submission" date="2006-07" db="EMBL/GenBank/DDBJ databases">
        <title>Large-scale analysis of RIKEN Arabidopsis full-length (RAFL) cDNAs.</title>
        <authorList>
            <person name="Totoki Y."/>
            <person name="Seki M."/>
            <person name="Ishida J."/>
            <person name="Nakajima M."/>
            <person name="Enju A."/>
            <person name="Kamiya A."/>
            <person name="Narusaka M."/>
            <person name="Shin-i T."/>
            <person name="Nakagawa M."/>
            <person name="Sakamoto N."/>
            <person name="Oishi K."/>
            <person name="Kohara Y."/>
            <person name="Kobayashi M."/>
            <person name="Toyoda A."/>
            <person name="Sakaki Y."/>
            <person name="Sakurai T."/>
            <person name="Iida K."/>
            <person name="Akiyama K."/>
            <person name="Satou M."/>
            <person name="Toyoda T."/>
            <person name="Konagaya A."/>
            <person name="Carninci P."/>
            <person name="Kawai J."/>
            <person name="Hayashizaki Y."/>
            <person name="Shinozaki K."/>
        </authorList>
    </citation>
    <scope>NUCLEOTIDE SEQUENCE [LARGE SCALE MRNA] (ISOFORM 1)</scope>
    <source>
        <strain>cv. Columbia</strain>
    </source>
</reference>
<reference key="6">
    <citation type="journal article" date="2004" name="Genome Res.">
        <title>Whole genome sequence comparisons and 'full-length' cDNA sequences: a combined approach to evaluate and improve Arabidopsis genome annotation.</title>
        <authorList>
            <person name="Castelli V."/>
            <person name="Aury J.-M."/>
            <person name="Jaillon O."/>
            <person name="Wincker P."/>
            <person name="Clepet C."/>
            <person name="Menard M."/>
            <person name="Cruaud C."/>
            <person name="Quetier F."/>
            <person name="Scarpelli C."/>
            <person name="Schaechter V."/>
            <person name="Temple G."/>
            <person name="Caboche M."/>
            <person name="Weissenbach J."/>
            <person name="Salanoubat M."/>
        </authorList>
    </citation>
    <scope>NUCLEOTIDE SEQUENCE [LARGE SCALE MRNA] (ISOFORM2)</scope>
    <source>
        <strain>cv. Columbia</strain>
    </source>
</reference>
<reference key="7">
    <citation type="journal article" date="1995" name="J. Biol. Chem.">
        <title>Immunological characterization and chloroplast localization of the tryptophan biosynthetic enzymes of the flowering plant Arabidopsis thaliana.</title>
        <authorList>
            <person name="Zhao J."/>
            <person name="Last R.L."/>
        </authorList>
    </citation>
    <scope>SUBCELLULAR LOCATION</scope>
</reference>
<reference key="8">
    <citation type="journal article" date="2001" name="Planta">
        <title>Differential expression of triplicate phosphoribosylanthranilate isomerase isogenes in the tryptophan biosynthetic pathway of Arabidopsis thaliana (L.) Heynh.</title>
        <authorList>
            <person name="He Y."/>
            <person name="Li J."/>
        </authorList>
    </citation>
    <scope>TISSUE SPECIFICITY</scope>
    <scope>INDUCTION</scope>
</reference>
<evidence type="ECO:0000255" key="1"/>
<evidence type="ECO:0000269" key="2">
    <source>
    </source>
</evidence>
<evidence type="ECO:0000269" key="3">
    <source>
    </source>
</evidence>
<evidence type="ECO:0000305" key="4"/>
<organism>
    <name type="scientific">Arabidopsis thaliana</name>
    <name type="common">Mouse-ear cress</name>
    <dbReference type="NCBI Taxonomy" id="3702"/>
    <lineage>
        <taxon>Eukaryota</taxon>
        <taxon>Viridiplantae</taxon>
        <taxon>Streptophyta</taxon>
        <taxon>Embryophyta</taxon>
        <taxon>Tracheophyta</taxon>
        <taxon>Spermatophyta</taxon>
        <taxon>Magnoliopsida</taxon>
        <taxon>eudicotyledons</taxon>
        <taxon>Gunneridae</taxon>
        <taxon>Pentapetalae</taxon>
        <taxon>rosids</taxon>
        <taxon>malvids</taxon>
        <taxon>Brassicales</taxon>
        <taxon>Brassicaceae</taxon>
        <taxon>Camelineae</taxon>
        <taxon>Arabidopsis</taxon>
    </lineage>
</organism>
<keyword id="KW-0025">Alternative splicing</keyword>
<keyword id="KW-0028">Amino-acid biosynthesis</keyword>
<keyword id="KW-0057">Aromatic amino acid biosynthesis</keyword>
<keyword id="KW-0150">Chloroplast</keyword>
<keyword id="KW-0413">Isomerase</keyword>
<keyword id="KW-0934">Plastid</keyword>
<keyword id="KW-1185">Reference proteome</keyword>
<keyword id="KW-0809">Transit peptide</keyword>
<keyword id="KW-0822">Tryptophan biosynthesis</keyword>
<dbReference type="EC" id="5.3.1.24"/>
<dbReference type="EMBL" id="U18968">
    <property type="protein sequence ID" value="AAC49003.1"/>
    <property type="molecule type" value="Genomic_DNA"/>
</dbReference>
<dbReference type="EMBL" id="AB005241">
    <property type="protein sequence ID" value="BAB11548.1"/>
    <property type="status" value="ALT_SEQ"/>
    <property type="molecule type" value="Genomic_DNA"/>
</dbReference>
<dbReference type="EMBL" id="CP002688">
    <property type="protein sequence ID" value="AED90894.1"/>
    <property type="molecule type" value="Genomic_DNA"/>
</dbReference>
<dbReference type="EMBL" id="CP002688">
    <property type="protein sequence ID" value="AED90895.1"/>
    <property type="molecule type" value="Genomic_DNA"/>
</dbReference>
<dbReference type="EMBL" id="BT003070">
    <property type="protein sequence ID" value="AAO23635.1"/>
    <property type="molecule type" value="mRNA"/>
</dbReference>
<dbReference type="EMBL" id="AK227265">
    <property type="protein sequence ID" value="BAE99293.1"/>
    <property type="molecule type" value="mRNA"/>
</dbReference>
<dbReference type="EMBL" id="BX829410">
    <property type="status" value="NOT_ANNOTATED_CDS"/>
    <property type="molecule type" value="mRNA"/>
</dbReference>
<dbReference type="RefSeq" id="NP_196178.2">
    <molecule id="Q42527-1"/>
    <property type="nucleotide sequence ID" value="NM_120641.5"/>
</dbReference>
<dbReference type="RefSeq" id="NP_974734.1">
    <molecule id="Q42527-2"/>
    <property type="nucleotide sequence ID" value="NM_203005.2"/>
</dbReference>
<dbReference type="SMR" id="Q42527"/>
<dbReference type="FunCoup" id="Q42527">
    <property type="interactions" value="274"/>
</dbReference>
<dbReference type="STRING" id="3702.Q42527"/>
<dbReference type="PaxDb" id="3702-AT5G05590.1"/>
<dbReference type="ProteomicsDB" id="248744">
    <molecule id="Q42527-1"/>
</dbReference>
<dbReference type="EnsemblPlants" id="AT5G05590.1">
    <molecule id="Q42527-1"/>
    <property type="protein sequence ID" value="AT5G05590.1"/>
    <property type="gene ID" value="AT5G05590"/>
</dbReference>
<dbReference type="EnsemblPlants" id="AT5G05590.2">
    <molecule id="Q42527-2"/>
    <property type="protein sequence ID" value="AT5G05590.2"/>
    <property type="gene ID" value="AT5G05590"/>
</dbReference>
<dbReference type="GeneID" id="830442"/>
<dbReference type="Gramene" id="AT5G05590.1">
    <molecule id="Q42527-1"/>
    <property type="protein sequence ID" value="AT5G05590.1"/>
    <property type="gene ID" value="AT5G05590"/>
</dbReference>
<dbReference type="Gramene" id="AT5G05590.2">
    <molecule id="Q42527-2"/>
    <property type="protein sequence ID" value="AT5G05590.2"/>
    <property type="gene ID" value="AT5G05590"/>
</dbReference>
<dbReference type="KEGG" id="ath:AT5G05590"/>
<dbReference type="Araport" id="AT5G05590"/>
<dbReference type="TAIR" id="AT5G05590">
    <property type="gene designation" value="PAI2"/>
</dbReference>
<dbReference type="eggNOG" id="KOG4202">
    <property type="taxonomic scope" value="Eukaryota"/>
</dbReference>
<dbReference type="HOGENOM" id="CLU_076364_0_0_1"/>
<dbReference type="InParanoid" id="Q42527"/>
<dbReference type="OMA" id="FIMGVTH"/>
<dbReference type="PhylomeDB" id="Q42527"/>
<dbReference type="BioCyc" id="ARA:AT5G05590-MONOMER"/>
<dbReference type="UniPathway" id="UPA00035">
    <property type="reaction ID" value="UER00042"/>
</dbReference>
<dbReference type="PRO" id="PR:Q42527"/>
<dbReference type="Proteomes" id="UP000006548">
    <property type="component" value="Chromosome 5"/>
</dbReference>
<dbReference type="ExpressionAtlas" id="Q42527">
    <property type="expression patterns" value="baseline and differential"/>
</dbReference>
<dbReference type="GO" id="GO:0009507">
    <property type="term" value="C:chloroplast"/>
    <property type="evidence" value="ECO:0000314"/>
    <property type="project" value="UniProtKB"/>
</dbReference>
<dbReference type="GO" id="GO:0004640">
    <property type="term" value="F:phosphoribosylanthranilate isomerase activity"/>
    <property type="evidence" value="ECO:0000250"/>
    <property type="project" value="TAIR"/>
</dbReference>
<dbReference type="GO" id="GO:0000162">
    <property type="term" value="P:L-tryptophan biosynthetic process"/>
    <property type="evidence" value="ECO:0000315"/>
    <property type="project" value="TAIR"/>
</dbReference>
<dbReference type="CDD" id="cd00405">
    <property type="entry name" value="PRAI"/>
    <property type="match status" value="1"/>
</dbReference>
<dbReference type="FunFam" id="3.20.20.70:FF:000075">
    <property type="entry name" value="Tryptophan biosynthesis protein TRP1"/>
    <property type="match status" value="1"/>
</dbReference>
<dbReference type="Gene3D" id="3.20.20.70">
    <property type="entry name" value="Aldolase class I"/>
    <property type="match status" value="1"/>
</dbReference>
<dbReference type="HAMAP" id="MF_00135">
    <property type="entry name" value="PRAI"/>
    <property type="match status" value="1"/>
</dbReference>
<dbReference type="InterPro" id="IPR013785">
    <property type="entry name" value="Aldolase_TIM"/>
</dbReference>
<dbReference type="InterPro" id="IPR001240">
    <property type="entry name" value="PRAI_dom"/>
</dbReference>
<dbReference type="InterPro" id="IPR011060">
    <property type="entry name" value="RibuloseP-bd_barrel"/>
</dbReference>
<dbReference type="InterPro" id="IPR044643">
    <property type="entry name" value="TrpF_fam"/>
</dbReference>
<dbReference type="PANTHER" id="PTHR42894">
    <property type="entry name" value="N-(5'-PHOSPHORIBOSYL)ANTHRANILATE ISOMERASE"/>
    <property type="match status" value="1"/>
</dbReference>
<dbReference type="PANTHER" id="PTHR42894:SF1">
    <property type="entry name" value="N-(5'-PHOSPHORIBOSYL)ANTHRANILATE ISOMERASE"/>
    <property type="match status" value="1"/>
</dbReference>
<dbReference type="Pfam" id="PF00697">
    <property type="entry name" value="PRAI"/>
    <property type="match status" value="1"/>
</dbReference>
<dbReference type="SUPFAM" id="SSF51366">
    <property type="entry name" value="Ribulose-phoshate binding barrel"/>
    <property type="match status" value="1"/>
</dbReference>